<proteinExistence type="evidence at transcript level"/>
<feature type="chain" id="PRO_0000413676" description="Short-chain dehydrogenase TIC 32, chloroplastic">
    <location>
        <begin position="1"/>
        <end position="322"/>
    </location>
</feature>
<feature type="region of interest" description="Interaction with calmodulin" evidence="2">
    <location>
        <begin position="298"/>
        <end position="314"/>
    </location>
</feature>
<feature type="active site" description="Proton acceptor" evidence="1">
    <location>
        <position position="192"/>
    </location>
</feature>
<feature type="binding site" evidence="3">
    <location>
        <begin position="36"/>
        <end position="42"/>
    </location>
    <ligand>
        <name>NADP(+)</name>
        <dbReference type="ChEBI" id="CHEBI:58349"/>
    </ligand>
</feature>
<feature type="binding site" evidence="3">
    <location>
        <begin position="88"/>
        <end position="89"/>
    </location>
    <ligand>
        <name>NADP(+)</name>
        <dbReference type="ChEBI" id="CHEBI:58349"/>
    </ligand>
</feature>
<feature type="binding site" evidence="3">
    <location>
        <position position="115"/>
    </location>
    <ligand>
        <name>NADP(+)</name>
        <dbReference type="ChEBI" id="CHEBI:58349"/>
    </ligand>
</feature>
<feature type="binding site" evidence="3">
    <location>
        <position position="136"/>
    </location>
    <ligand>
        <name>NADP(+)</name>
        <dbReference type="ChEBI" id="CHEBI:58349"/>
    </ligand>
</feature>
<feature type="binding site" evidence="3">
    <location>
        <position position="170"/>
    </location>
    <ligand>
        <name>substrate</name>
    </ligand>
</feature>
<feature type="splice variant" id="VSP_041954" description="In isoform 3." evidence="8">
    <location>
        <begin position="139"/>
        <end position="148"/>
    </location>
</feature>
<feature type="splice variant" id="VSP_041955" description="In isoform 2 and isoform 3." evidence="7">
    <location>
        <begin position="191"/>
        <end position="192"/>
    </location>
</feature>
<feature type="sequence conflict" description="In Ref. 3; BAE99458." evidence="8" ref="3">
    <original>K</original>
    <variation>E</variation>
    <location>
        <position position="217"/>
    </location>
</feature>
<dbReference type="EC" id="1.1.1.-"/>
<dbReference type="EMBL" id="AL031326">
    <property type="protein sequence ID" value="CAA20464.1"/>
    <property type="status" value="ALT_SEQ"/>
    <property type="molecule type" value="Genomic_DNA"/>
</dbReference>
<dbReference type="EMBL" id="AL161559">
    <property type="protein sequence ID" value="CAB79298.1"/>
    <property type="status" value="ALT_SEQ"/>
    <property type="molecule type" value="Genomic_DNA"/>
</dbReference>
<dbReference type="EMBL" id="CP002687">
    <property type="protein sequence ID" value="AEE84753.1"/>
    <property type="molecule type" value="Genomic_DNA"/>
</dbReference>
<dbReference type="EMBL" id="CP002687">
    <property type="protein sequence ID" value="AEE84754.1"/>
    <property type="molecule type" value="Genomic_DNA"/>
</dbReference>
<dbReference type="EMBL" id="CP002687">
    <property type="protein sequence ID" value="AEE84755.1"/>
    <property type="molecule type" value="Genomic_DNA"/>
</dbReference>
<dbReference type="EMBL" id="AK227455">
    <property type="protein sequence ID" value="BAE99458.1"/>
    <property type="molecule type" value="mRNA"/>
</dbReference>
<dbReference type="EMBL" id="BT030011">
    <property type="protein sequence ID" value="ABN04749.1"/>
    <property type="molecule type" value="mRNA"/>
</dbReference>
<dbReference type="EMBL" id="AY088231">
    <property type="protein sequence ID" value="AAM65772.1"/>
    <property type="molecule type" value="mRNA"/>
</dbReference>
<dbReference type="PIR" id="T05381">
    <property type="entry name" value="T05381"/>
</dbReference>
<dbReference type="RefSeq" id="NP_001119035.1">
    <molecule id="A2RVM0-3"/>
    <property type="nucleotide sequence ID" value="NM_001125563.1"/>
</dbReference>
<dbReference type="RefSeq" id="NP_567681.1">
    <molecule id="A2RVM0-2"/>
    <property type="nucleotide sequence ID" value="NM_118472.3"/>
</dbReference>
<dbReference type="RefSeq" id="NP_849428.1">
    <molecule id="A2RVM0-1"/>
    <property type="nucleotide sequence ID" value="NM_179097.3"/>
</dbReference>
<dbReference type="SMR" id="A2RVM0"/>
<dbReference type="BioGRID" id="13731">
    <property type="interactions" value="4"/>
</dbReference>
<dbReference type="FunCoup" id="A2RVM0">
    <property type="interactions" value="2047"/>
</dbReference>
<dbReference type="STRING" id="3702.A2RVM0"/>
<dbReference type="iPTMnet" id="A2RVM0"/>
<dbReference type="PaxDb" id="3702-AT4G23430.2"/>
<dbReference type="EnsemblPlants" id="AT4G23430.1">
    <molecule id="A2RVM0-2"/>
    <property type="protein sequence ID" value="AT4G23430.1"/>
    <property type="gene ID" value="AT4G23430"/>
</dbReference>
<dbReference type="EnsemblPlants" id="AT4G23430.2">
    <molecule id="A2RVM0-1"/>
    <property type="protein sequence ID" value="AT4G23430.2"/>
    <property type="gene ID" value="AT4G23430"/>
</dbReference>
<dbReference type="EnsemblPlants" id="AT4G23430.3">
    <molecule id="A2RVM0-3"/>
    <property type="protein sequence ID" value="AT4G23430.3"/>
    <property type="gene ID" value="AT4G23430"/>
</dbReference>
<dbReference type="GeneID" id="828442"/>
<dbReference type="Gramene" id="AT4G23430.1">
    <molecule id="A2RVM0-2"/>
    <property type="protein sequence ID" value="AT4G23430.1"/>
    <property type="gene ID" value="AT4G23430"/>
</dbReference>
<dbReference type="Gramene" id="AT4G23430.2">
    <molecule id="A2RVM0-1"/>
    <property type="protein sequence ID" value="AT4G23430.2"/>
    <property type="gene ID" value="AT4G23430"/>
</dbReference>
<dbReference type="Gramene" id="AT4G23430.3">
    <molecule id="A2RVM0-3"/>
    <property type="protein sequence ID" value="AT4G23430.3"/>
    <property type="gene ID" value="AT4G23430"/>
</dbReference>
<dbReference type="KEGG" id="ath:AT4G23430"/>
<dbReference type="Araport" id="AT4G23430"/>
<dbReference type="TAIR" id="AT4G23430">
    <property type="gene designation" value="TIC32-IVA"/>
</dbReference>
<dbReference type="eggNOG" id="KOG1208">
    <property type="taxonomic scope" value="Eukaryota"/>
</dbReference>
<dbReference type="HOGENOM" id="CLU_010194_44_0_1"/>
<dbReference type="InParanoid" id="A2RVM0"/>
<dbReference type="OMA" id="EKWTGIG"/>
<dbReference type="OrthoDB" id="191139at2759"/>
<dbReference type="PhylomeDB" id="A2RVM0"/>
<dbReference type="PRO" id="PR:A2RVM0"/>
<dbReference type="Proteomes" id="UP000006548">
    <property type="component" value="Chromosome 4"/>
</dbReference>
<dbReference type="ExpressionAtlas" id="A2RVM0">
    <property type="expression patterns" value="baseline and differential"/>
</dbReference>
<dbReference type="GO" id="GO:0009507">
    <property type="term" value="C:chloroplast"/>
    <property type="evidence" value="ECO:0007005"/>
    <property type="project" value="TAIR"/>
</dbReference>
<dbReference type="GO" id="GO:0009941">
    <property type="term" value="C:chloroplast envelope"/>
    <property type="evidence" value="ECO:0007005"/>
    <property type="project" value="TAIR"/>
</dbReference>
<dbReference type="GO" id="GO:0009706">
    <property type="term" value="C:chloroplast inner membrane"/>
    <property type="evidence" value="ECO:0000314"/>
    <property type="project" value="TAIR"/>
</dbReference>
<dbReference type="GO" id="GO:0005829">
    <property type="term" value="C:cytosol"/>
    <property type="evidence" value="ECO:0007005"/>
    <property type="project" value="TAIR"/>
</dbReference>
<dbReference type="GO" id="GO:0005886">
    <property type="term" value="C:plasma membrane"/>
    <property type="evidence" value="ECO:0007005"/>
    <property type="project" value="TAIR"/>
</dbReference>
<dbReference type="GO" id="GO:0016491">
    <property type="term" value="F:oxidoreductase activity"/>
    <property type="evidence" value="ECO:0007669"/>
    <property type="project" value="UniProtKB-KW"/>
</dbReference>
<dbReference type="GO" id="GO:0015031">
    <property type="term" value="P:protein transport"/>
    <property type="evidence" value="ECO:0007669"/>
    <property type="project" value="UniProtKB-KW"/>
</dbReference>
<dbReference type="CDD" id="cd05327">
    <property type="entry name" value="retinol-DH_like_SDR_c_like"/>
    <property type="match status" value="1"/>
</dbReference>
<dbReference type="FunFam" id="3.40.50.720:FF:000561">
    <property type="entry name" value="NAD(P)-binding Rossmann-fold superfamily protein"/>
    <property type="match status" value="1"/>
</dbReference>
<dbReference type="Gene3D" id="3.40.50.720">
    <property type="entry name" value="NAD(P)-binding Rossmann-like Domain"/>
    <property type="match status" value="1"/>
</dbReference>
<dbReference type="InterPro" id="IPR036291">
    <property type="entry name" value="NAD(P)-bd_dom_sf"/>
</dbReference>
<dbReference type="InterPro" id="IPR002347">
    <property type="entry name" value="SDR_fam"/>
</dbReference>
<dbReference type="InterPro" id="IPR055280">
    <property type="entry name" value="TIC32"/>
</dbReference>
<dbReference type="PANTHER" id="PTHR48476">
    <property type="entry name" value="SHORT-CHAIN DEHYDROGENASE TIC 32, CHLOROPLASTIC-LIKE"/>
    <property type="match status" value="1"/>
</dbReference>
<dbReference type="PANTHER" id="PTHR48476:SF1">
    <property type="entry name" value="SHORT-CHAIN DEHYDROGENASE TIC 32, CHLOROPLASTIC-LIKE"/>
    <property type="match status" value="1"/>
</dbReference>
<dbReference type="Pfam" id="PF00106">
    <property type="entry name" value="adh_short"/>
    <property type="match status" value="1"/>
</dbReference>
<dbReference type="PRINTS" id="PR00081">
    <property type="entry name" value="GDHRDH"/>
</dbReference>
<dbReference type="SUPFAM" id="SSF51735">
    <property type="entry name" value="NAD(P)-binding Rossmann-fold domains"/>
    <property type="match status" value="1"/>
</dbReference>
<sequence length="322" mass="34740">MWFFGSKGASGFSSRSTAEEVTHGVDGTGLTAIVTGASSGIGVETARVLSLRGVHVVMAVRNTDSGAKVKEDIVKQVPGAKLDVMELDLSSMQSVRKFASEYKSTGLPLNLLINNAGIMACPFMLSKDNIELQFATNHLGHFLLTKLLLDTMKSTSRESKREGRIVNLSSEAHRFSYPEGVRFDKINDKSSYSSMRAYGQSKLCNVLHANELTKQLKEDGVNITANSLHPGAIMTNLGRYFNPYLAVAVGAVAKYILKSVPQGAATTCYVALNPQVAGVSGEYFQDSNIAKPLPLVKDTELAKKVWDFSTKLTDSQSGESSS</sequence>
<comment type="function">
    <text evidence="5">Involved in protein precursor import into chloroplasts. Part of the redox regulon consisting of TIC32, TIC 55 and TIC62.</text>
</comment>
<comment type="subunit">
    <text>Part of the Tic complex. Interacts with TIC110.</text>
</comment>
<comment type="subcellular location">
    <subcellularLocation>
        <location evidence="8">Plastid</location>
        <location evidence="8">Chloroplast inner membrane</location>
    </subcellularLocation>
</comment>
<comment type="alternative products">
    <event type="alternative splicing"/>
    <isoform>
        <id>A2RVM0-1</id>
        <name>1</name>
        <sequence type="displayed"/>
    </isoform>
    <isoform>
        <id>A2RVM0-2</id>
        <name>2</name>
        <sequence type="described" ref="VSP_041955"/>
    </isoform>
    <isoform>
        <id>A2RVM0-3</id>
        <name>3</name>
        <sequence type="described" ref="VSP_041954 VSP_041955"/>
    </isoform>
</comment>
<comment type="tissue specificity">
    <text evidence="4">Expressed in leaves and roots.</text>
</comment>
<comment type="disruption phenotype">
    <text evidence="5">Embryo lethal.</text>
</comment>
<comment type="similarity">
    <text evidence="8">Belongs to the short-chain dehydrogenases/reductases (SDR) family.</text>
</comment>
<comment type="sequence caution" evidence="8">
    <conflict type="erroneous gene model prediction">
        <sequence resource="EMBL-CDS" id="CAA20464"/>
    </conflict>
</comment>
<comment type="sequence caution" evidence="8">
    <conflict type="erroneous gene model prediction">
        <sequence resource="EMBL-CDS" id="CAB79298"/>
    </conflict>
</comment>
<gene>
    <name evidence="6" type="primary">TIC32</name>
    <name evidence="9" type="ordered locus">At4g23430</name>
    <name evidence="10" type="ORF">F16G20.130</name>
</gene>
<evidence type="ECO:0000250" key="1">
    <source>
        <dbReference type="UniProtKB" id="P00334"/>
    </source>
</evidence>
<evidence type="ECO:0000250" key="2">
    <source>
        <dbReference type="UniProtKB" id="Q6RVV4"/>
    </source>
</evidence>
<evidence type="ECO:0000250" key="3">
    <source>
        <dbReference type="UniProtKB" id="Q8KES3"/>
    </source>
</evidence>
<evidence type="ECO:0000269" key="4">
    <source>
    </source>
</evidence>
<evidence type="ECO:0000269" key="5">
    <source>
    </source>
</evidence>
<evidence type="ECO:0000303" key="6">
    <source>
    </source>
</evidence>
<evidence type="ECO:0000303" key="7">
    <source ref="5"/>
</evidence>
<evidence type="ECO:0000305" key="8"/>
<evidence type="ECO:0000312" key="9">
    <source>
        <dbReference type="Araport" id="AT4G23430"/>
    </source>
</evidence>
<evidence type="ECO:0000312" key="10">
    <source>
        <dbReference type="EMBL" id="CAA20464.1"/>
    </source>
</evidence>
<organism>
    <name type="scientific">Arabidopsis thaliana</name>
    <name type="common">Mouse-ear cress</name>
    <dbReference type="NCBI Taxonomy" id="3702"/>
    <lineage>
        <taxon>Eukaryota</taxon>
        <taxon>Viridiplantae</taxon>
        <taxon>Streptophyta</taxon>
        <taxon>Embryophyta</taxon>
        <taxon>Tracheophyta</taxon>
        <taxon>Spermatophyta</taxon>
        <taxon>Magnoliopsida</taxon>
        <taxon>eudicotyledons</taxon>
        <taxon>Gunneridae</taxon>
        <taxon>Pentapetalae</taxon>
        <taxon>rosids</taxon>
        <taxon>malvids</taxon>
        <taxon>Brassicales</taxon>
        <taxon>Brassicaceae</taxon>
        <taxon>Camelineae</taxon>
        <taxon>Arabidopsis</taxon>
    </lineage>
</organism>
<protein>
    <recommendedName>
        <fullName evidence="6">Short-chain dehydrogenase TIC 32, chloroplastic</fullName>
        <ecNumber>1.1.1.-</ecNumber>
    </recommendedName>
    <alternativeName>
        <fullName evidence="6">Translocon at the inner envelope membrane of chloroplasts 32</fullName>
        <shortName evidence="6">AtTIC32</shortName>
    </alternativeName>
</protein>
<name>TIC32_ARATH</name>
<keyword id="KW-0025">Alternative splicing</keyword>
<keyword id="KW-0150">Chloroplast</keyword>
<keyword id="KW-0472">Membrane</keyword>
<keyword id="KW-0560">Oxidoreductase</keyword>
<keyword id="KW-0934">Plastid</keyword>
<keyword id="KW-1001">Plastid inner membrane</keyword>
<keyword id="KW-0653">Protein transport</keyword>
<keyword id="KW-1185">Reference proteome</keyword>
<keyword id="KW-0813">Transport</keyword>
<accession>A2RVM0</accession>
<accession>B3H4I7</accession>
<accession>O81739</accession>
<accession>Q0WTU0</accession>
<accession>Q8L9T6</accession>
<reference key="1">
    <citation type="journal article" date="1999" name="Nature">
        <title>Sequence and analysis of chromosome 4 of the plant Arabidopsis thaliana.</title>
        <authorList>
            <person name="Mayer K.F.X."/>
            <person name="Schueller C."/>
            <person name="Wambutt R."/>
            <person name="Murphy G."/>
            <person name="Volckaert G."/>
            <person name="Pohl T."/>
            <person name="Duesterhoeft A."/>
            <person name="Stiekema W."/>
            <person name="Entian K.-D."/>
            <person name="Terryn N."/>
            <person name="Harris B."/>
            <person name="Ansorge W."/>
            <person name="Brandt P."/>
            <person name="Grivell L.A."/>
            <person name="Rieger M."/>
            <person name="Weichselgartner M."/>
            <person name="de Simone V."/>
            <person name="Obermaier B."/>
            <person name="Mache R."/>
            <person name="Mueller M."/>
            <person name="Kreis M."/>
            <person name="Delseny M."/>
            <person name="Puigdomenech P."/>
            <person name="Watson M."/>
            <person name="Schmidtheini T."/>
            <person name="Reichert B."/>
            <person name="Portetelle D."/>
            <person name="Perez-Alonso M."/>
            <person name="Boutry M."/>
            <person name="Bancroft I."/>
            <person name="Vos P."/>
            <person name="Hoheisel J."/>
            <person name="Zimmermann W."/>
            <person name="Wedler H."/>
            <person name="Ridley P."/>
            <person name="Langham S.-A."/>
            <person name="McCullagh B."/>
            <person name="Bilham L."/>
            <person name="Robben J."/>
            <person name="van der Schueren J."/>
            <person name="Grymonprez B."/>
            <person name="Chuang Y.-J."/>
            <person name="Vandenbussche F."/>
            <person name="Braeken M."/>
            <person name="Weltjens I."/>
            <person name="Voet M."/>
            <person name="Bastiaens I."/>
            <person name="Aert R."/>
            <person name="Defoor E."/>
            <person name="Weitzenegger T."/>
            <person name="Bothe G."/>
            <person name="Ramsperger U."/>
            <person name="Hilbert H."/>
            <person name="Braun M."/>
            <person name="Holzer E."/>
            <person name="Brandt A."/>
            <person name="Peters S."/>
            <person name="van Staveren M."/>
            <person name="Dirkse W."/>
            <person name="Mooijman P."/>
            <person name="Klein Lankhorst R."/>
            <person name="Rose M."/>
            <person name="Hauf J."/>
            <person name="Koetter P."/>
            <person name="Berneiser S."/>
            <person name="Hempel S."/>
            <person name="Feldpausch M."/>
            <person name="Lamberth S."/>
            <person name="Van den Daele H."/>
            <person name="De Keyser A."/>
            <person name="Buysshaert C."/>
            <person name="Gielen J."/>
            <person name="Villarroel R."/>
            <person name="De Clercq R."/>
            <person name="van Montagu M."/>
            <person name="Rogers J."/>
            <person name="Cronin A."/>
            <person name="Quail M.A."/>
            <person name="Bray-Allen S."/>
            <person name="Clark L."/>
            <person name="Doggett J."/>
            <person name="Hall S."/>
            <person name="Kay M."/>
            <person name="Lennard N."/>
            <person name="McLay K."/>
            <person name="Mayes R."/>
            <person name="Pettett A."/>
            <person name="Rajandream M.A."/>
            <person name="Lyne M."/>
            <person name="Benes V."/>
            <person name="Rechmann S."/>
            <person name="Borkova D."/>
            <person name="Bloecker H."/>
            <person name="Scharfe M."/>
            <person name="Grimm M."/>
            <person name="Loehnert T.-H."/>
            <person name="Dose S."/>
            <person name="de Haan M."/>
            <person name="Maarse A.C."/>
            <person name="Schaefer M."/>
            <person name="Mueller-Auer S."/>
            <person name="Gabel C."/>
            <person name="Fuchs M."/>
            <person name="Fartmann B."/>
            <person name="Granderath K."/>
            <person name="Dauner D."/>
            <person name="Herzl A."/>
            <person name="Neumann S."/>
            <person name="Argiriou A."/>
            <person name="Vitale D."/>
            <person name="Liguori R."/>
            <person name="Piravandi E."/>
            <person name="Massenet O."/>
            <person name="Quigley F."/>
            <person name="Clabauld G."/>
            <person name="Muendlein A."/>
            <person name="Felber R."/>
            <person name="Schnabl S."/>
            <person name="Hiller R."/>
            <person name="Schmidt W."/>
            <person name="Lecharny A."/>
            <person name="Aubourg S."/>
            <person name="Chefdor F."/>
            <person name="Cooke R."/>
            <person name="Berger C."/>
            <person name="Monfort A."/>
            <person name="Casacuberta E."/>
            <person name="Gibbons T."/>
            <person name="Weber N."/>
            <person name="Vandenbol M."/>
            <person name="Bargues M."/>
            <person name="Terol J."/>
            <person name="Torres A."/>
            <person name="Perez-Perez A."/>
            <person name="Purnelle B."/>
            <person name="Bent E."/>
            <person name="Johnson S."/>
            <person name="Tacon D."/>
            <person name="Jesse T."/>
            <person name="Heijnen L."/>
            <person name="Schwarz S."/>
            <person name="Scholler P."/>
            <person name="Heber S."/>
            <person name="Francs P."/>
            <person name="Bielke C."/>
            <person name="Frishman D."/>
            <person name="Haase D."/>
            <person name="Lemcke K."/>
            <person name="Mewes H.-W."/>
            <person name="Stocker S."/>
            <person name="Zaccaria P."/>
            <person name="Bevan M."/>
            <person name="Wilson R.K."/>
            <person name="de la Bastide M."/>
            <person name="Habermann K."/>
            <person name="Parnell L."/>
            <person name="Dedhia N."/>
            <person name="Gnoj L."/>
            <person name="Schutz K."/>
            <person name="Huang E."/>
            <person name="Spiegel L."/>
            <person name="Sekhon M."/>
            <person name="Murray J."/>
            <person name="Sheet P."/>
            <person name="Cordes M."/>
            <person name="Abu-Threideh J."/>
            <person name="Stoneking T."/>
            <person name="Kalicki J."/>
            <person name="Graves T."/>
            <person name="Harmon G."/>
            <person name="Edwards J."/>
            <person name="Latreille P."/>
            <person name="Courtney L."/>
            <person name="Cloud J."/>
            <person name="Abbott A."/>
            <person name="Scott K."/>
            <person name="Johnson D."/>
            <person name="Minx P."/>
            <person name="Bentley D."/>
            <person name="Fulton B."/>
            <person name="Miller N."/>
            <person name="Greco T."/>
            <person name="Kemp K."/>
            <person name="Kramer J."/>
            <person name="Fulton L."/>
            <person name="Mardis E."/>
            <person name="Dante M."/>
            <person name="Pepin K."/>
            <person name="Hillier L.W."/>
            <person name="Nelson J."/>
            <person name="Spieth J."/>
            <person name="Ryan E."/>
            <person name="Andrews S."/>
            <person name="Geisel C."/>
            <person name="Layman D."/>
            <person name="Du H."/>
            <person name="Ali J."/>
            <person name="Berghoff A."/>
            <person name="Jones K."/>
            <person name="Drone K."/>
            <person name="Cotton M."/>
            <person name="Joshu C."/>
            <person name="Antonoiu B."/>
            <person name="Zidanic M."/>
            <person name="Strong C."/>
            <person name="Sun H."/>
            <person name="Lamar B."/>
            <person name="Yordan C."/>
            <person name="Ma P."/>
            <person name="Zhong J."/>
            <person name="Preston R."/>
            <person name="Vil D."/>
            <person name="Shekher M."/>
            <person name="Matero A."/>
            <person name="Shah R."/>
            <person name="Swaby I.K."/>
            <person name="O'Shaughnessy A."/>
            <person name="Rodriguez M."/>
            <person name="Hoffman J."/>
            <person name="Till S."/>
            <person name="Granat S."/>
            <person name="Shohdy N."/>
            <person name="Hasegawa A."/>
            <person name="Hameed A."/>
            <person name="Lodhi M."/>
            <person name="Johnson A."/>
            <person name="Chen E."/>
            <person name="Marra M.A."/>
            <person name="Martienssen R."/>
            <person name="McCombie W.R."/>
        </authorList>
    </citation>
    <scope>NUCLEOTIDE SEQUENCE [LARGE SCALE GENOMIC DNA]</scope>
    <source>
        <strain>cv. Columbia</strain>
    </source>
</reference>
<reference key="2">
    <citation type="journal article" date="2017" name="Plant J.">
        <title>Araport11: a complete reannotation of the Arabidopsis thaliana reference genome.</title>
        <authorList>
            <person name="Cheng C.Y."/>
            <person name="Krishnakumar V."/>
            <person name="Chan A.P."/>
            <person name="Thibaud-Nissen F."/>
            <person name="Schobel S."/>
            <person name="Town C.D."/>
        </authorList>
    </citation>
    <scope>GENOME REANNOTATION</scope>
    <source>
        <strain>cv. Columbia</strain>
    </source>
</reference>
<reference key="3">
    <citation type="submission" date="2006-07" db="EMBL/GenBank/DDBJ databases">
        <title>Large-scale analysis of RIKEN Arabidopsis full-length (RAFL) cDNAs.</title>
        <authorList>
            <person name="Totoki Y."/>
            <person name="Seki M."/>
            <person name="Ishida J."/>
            <person name="Nakajima M."/>
            <person name="Enju A."/>
            <person name="Kamiya A."/>
            <person name="Narusaka M."/>
            <person name="Shin-i T."/>
            <person name="Nakagawa M."/>
            <person name="Sakamoto N."/>
            <person name="Oishi K."/>
            <person name="Kohara Y."/>
            <person name="Kobayashi M."/>
            <person name="Toyoda A."/>
            <person name="Sakaki Y."/>
            <person name="Sakurai T."/>
            <person name="Iida K."/>
            <person name="Akiyama K."/>
            <person name="Satou M."/>
            <person name="Toyoda T."/>
            <person name="Konagaya A."/>
            <person name="Carninci P."/>
            <person name="Kawai J."/>
            <person name="Hayashizaki Y."/>
            <person name="Shinozaki K."/>
        </authorList>
    </citation>
    <scope>NUCLEOTIDE SEQUENCE [LARGE SCALE MRNA]</scope>
    <source>
        <strain>cv. Columbia</strain>
    </source>
</reference>
<reference key="4">
    <citation type="submission" date="2007-01" db="EMBL/GenBank/DDBJ databases">
        <title>Arabidopsis ORF clones.</title>
        <authorList>
            <person name="Bautista V.R."/>
            <person name="Kim C.J."/>
            <person name="Chen H."/>
            <person name="Wu S.Y."/>
            <person name="De Los Reyes C."/>
            <person name="Ecker J.R."/>
        </authorList>
    </citation>
    <scope>NUCLEOTIDE SEQUENCE [LARGE SCALE MRNA]</scope>
</reference>
<reference key="5">
    <citation type="submission" date="2002-03" db="EMBL/GenBank/DDBJ databases">
        <title>Full-length cDNA from Arabidopsis thaliana.</title>
        <authorList>
            <person name="Brover V.V."/>
            <person name="Troukhan M.E."/>
            <person name="Alexandrov N.A."/>
            <person name="Lu Y.-P."/>
            <person name="Flavell R.B."/>
            <person name="Feldmann K.A."/>
        </authorList>
    </citation>
    <scope>NUCLEOTIDE SEQUENCE [LARGE SCALE MRNA] (ISOFORM 2)</scope>
</reference>
<reference key="6">
    <citation type="journal article" date="2004" name="J. Biol. Chem.">
        <title>The protein translocon of the plastid envelopes.</title>
        <authorList>
            <person name="Vojta A."/>
            <person name="Alavi M."/>
            <person name="Becker T."/>
            <person name="Hoermann F."/>
            <person name="Kuechler M."/>
            <person name="Soll J."/>
            <person name="Thomson R."/>
            <person name="Schleiff E."/>
        </authorList>
    </citation>
    <scope>TISSUE SPECIFICITY</scope>
</reference>
<reference key="7">
    <citation type="journal article" date="2004" name="J. Biol. Chem.">
        <title>Tic32, an essential component in chloroplast biogenesis.</title>
        <authorList>
            <person name="Hoermann F."/>
            <person name="Kuechler M."/>
            <person name="Sveshnikov D."/>
            <person name="Oppermann U."/>
            <person name="Li Y."/>
            <person name="Soll J."/>
        </authorList>
    </citation>
    <scope>FUNCTION</scope>
    <scope>DISRUPTION PHENOTYPE</scope>
</reference>
<reference key="8">
    <citation type="journal article" date="2010" name="Biochim. Biophys. Acta">
        <title>Protein import into chloroplasts: the Tic complex and its regulation.</title>
        <authorList>
            <person name="Kovacs-Bogdan E."/>
            <person name="Soll J."/>
            <person name="Bolter B."/>
        </authorList>
    </citation>
    <scope>REVIEW</scope>
</reference>